<sequence>MLLWVLALLFLCAFLWNYKGQLKIADIADKYIFITGCDSGFGNLAARTFDRKGFRVIAACLTESGSEALKAKTSERLHTVLLDVTNPENVKETAQWVKSHVGEKGLWGLINNAGVLGVLAPTDWLTVDDYREPIEVNLFGLINVTLNMLPLVKKARGRVINVSSIGGRLAFGGGGYTPSKYAVEGFNDSLRRDMKAFGVHVSCIEPGLFKTGLADPIKTTEKKLAIWKHLSPDIKQQYGEGYIEKSLHRLKSSTSSVNLDLSLVVECMDHALTSLFPKTRYTAGKDAKTFWIPLSHMPAALQDFLLLKEKVELANPQAV</sequence>
<protein>
    <recommendedName>
        <fullName>Dehydrogenase/reductase SDR family member 9</fullName>
        <ecNumber evidence="2">1.1.1.209</ecNumber>
        <ecNumber evidence="2">1.1.1.53</ecNumber>
    </recommendedName>
    <alternativeName>
        <fullName>3-alpha hydroxysteroid dehydrogenase</fullName>
        <shortName>3-alpha-HSD</shortName>
    </alternativeName>
    <alternativeName>
        <fullName>Retinol dehydrogenase</fullName>
        <ecNumber evidence="4">1.1.1.105</ecNumber>
    </alternativeName>
    <alternativeName>
        <fullName>Short-chain dehydrogenase/reductase retSDR8</fullName>
    </alternativeName>
</protein>
<gene>
    <name type="primary">Dhrs9</name>
    <name evidence="5" type="synonym">eRolDH</name>
</gene>
<accession>Q8VD48</accession>
<organism>
    <name type="scientific">Rattus norvegicus</name>
    <name type="common">Rat</name>
    <dbReference type="NCBI Taxonomy" id="10116"/>
    <lineage>
        <taxon>Eukaryota</taxon>
        <taxon>Metazoa</taxon>
        <taxon>Chordata</taxon>
        <taxon>Craniata</taxon>
        <taxon>Vertebrata</taxon>
        <taxon>Euteleostomi</taxon>
        <taxon>Mammalia</taxon>
        <taxon>Eutheria</taxon>
        <taxon>Euarchontoglires</taxon>
        <taxon>Glires</taxon>
        <taxon>Rodentia</taxon>
        <taxon>Myomorpha</taxon>
        <taxon>Muroidea</taxon>
        <taxon>Muridae</taxon>
        <taxon>Murinae</taxon>
        <taxon>Rattus</taxon>
    </lineage>
</organism>
<evidence type="ECO:0000250" key="1"/>
<evidence type="ECO:0000250" key="2">
    <source>
        <dbReference type="UniProtKB" id="Q9BPW9"/>
    </source>
</evidence>
<evidence type="ECO:0000255" key="3"/>
<evidence type="ECO:0000269" key="4">
    <source>
    </source>
</evidence>
<evidence type="ECO:0000303" key="5">
    <source>
    </source>
</evidence>
<evidence type="ECO:0000305" key="6"/>
<name>DHRS9_RAT</name>
<reference key="1">
    <citation type="journal article" date="2002" name="Biol. Reprod.">
        <title>A novel short-chain alcohol dehydrogenase from rats with retinol dehydrogenase activity, cyclically expressed in uterine epithelium.</title>
        <authorList>
            <person name="Rexer B.N."/>
            <person name="Ong D.E."/>
        </authorList>
    </citation>
    <scope>NUCLEOTIDE SEQUENCE [MRNA]</scope>
    <scope>FUNCTION</scope>
    <scope>TISSUE SPECIFICITY</scope>
    <scope>CATALYTIC ACTIVITY</scope>
    <source>
        <strain>Sprague-Dawley</strain>
        <tissue>Uterus</tissue>
    </source>
</reference>
<dbReference type="EC" id="1.1.1.209" evidence="2"/>
<dbReference type="EC" id="1.1.1.53" evidence="2"/>
<dbReference type="EC" id="1.1.1.105" evidence="4"/>
<dbReference type="EMBL" id="AF337953">
    <property type="protein sequence ID" value="AAL73225.1"/>
    <property type="molecule type" value="mRNA"/>
</dbReference>
<dbReference type="RefSeq" id="NP_570832.1">
    <property type="nucleotide sequence ID" value="NM_130819.3"/>
</dbReference>
<dbReference type="RefSeq" id="XP_063139097.1">
    <property type="nucleotide sequence ID" value="XM_063283027.1"/>
</dbReference>
<dbReference type="SMR" id="Q8VD48"/>
<dbReference type="FunCoup" id="Q8VD48">
    <property type="interactions" value="31"/>
</dbReference>
<dbReference type="STRING" id="10116.ENSRNOP00000069708"/>
<dbReference type="BindingDB" id="Q8VD48"/>
<dbReference type="ChEMBL" id="CHEMBL1075220"/>
<dbReference type="DrugCentral" id="Q8VD48"/>
<dbReference type="iPTMnet" id="Q8VD48"/>
<dbReference type="PhosphoSitePlus" id="Q8VD48"/>
<dbReference type="PaxDb" id="10116-ENSRNOP00000008921"/>
<dbReference type="Ensembl" id="ENSRNOT00000106393.1">
    <property type="protein sequence ID" value="ENSRNOP00000091619.1"/>
    <property type="gene ID" value="ENSRNOG00000065735.1"/>
</dbReference>
<dbReference type="GeneID" id="170635"/>
<dbReference type="KEGG" id="rno:170635"/>
<dbReference type="UCSC" id="RGD:620655">
    <property type="organism name" value="rat"/>
</dbReference>
<dbReference type="AGR" id="RGD:620655"/>
<dbReference type="CTD" id="10170"/>
<dbReference type="RGD" id="620655">
    <property type="gene designation" value="Dhrs9"/>
</dbReference>
<dbReference type="eggNOG" id="KOG1610">
    <property type="taxonomic scope" value="Eukaryota"/>
</dbReference>
<dbReference type="GeneTree" id="ENSGT00940000158665"/>
<dbReference type="HOGENOM" id="CLU_010194_2_0_1"/>
<dbReference type="InParanoid" id="Q8VD48"/>
<dbReference type="OMA" id="PQTHYIA"/>
<dbReference type="OrthoDB" id="10763at9989"/>
<dbReference type="PhylomeDB" id="Q8VD48"/>
<dbReference type="Reactome" id="R-RNO-5365859">
    <property type="pathway name" value="RA biosynthesis pathway"/>
</dbReference>
<dbReference type="PRO" id="PR:Q8VD48"/>
<dbReference type="Proteomes" id="UP000002494">
    <property type="component" value="Chromosome 3"/>
</dbReference>
<dbReference type="Bgee" id="ENSRNOG00000058568">
    <property type="expression patterns" value="Expressed in esophagus and 13 other cell types or tissues"/>
</dbReference>
<dbReference type="GO" id="GO:0005789">
    <property type="term" value="C:endoplasmic reticulum membrane"/>
    <property type="evidence" value="ECO:0000250"/>
    <property type="project" value="UniProtKB"/>
</dbReference>
<dbReference type="GO" id="GO:0043231">
    <property type="term" value="C:intracellular membrane-bounded organelle"/>
    <property type="evidence" value="ECO:0000318"/>
    <property type="project" value="GO_Central"/>
</dbReference>
<dbReference type="GO" id="GO:0004022">
    <property type="term" value="F:alcohol dehydrogenase (NAD+) activity"/>
    <property type="evidence" value="ECO:0000250"/>
    <property type="project" value="UniProtKB"/>
</dbReference>
<dbReference type="GO" id="GO:0004745">
    <property type="term" value="F:all-trans-retinol dehydrogenase (NAD+) activity"/>
    <property type="evidence" value="ECO:0000315"/>
    <property type="project" value="RGD"/>
</dbReference>
<dbReference type="GO" id="GO:0047044">
    <property type="term" value="F:androstan-3-alpha,17-beta-diol dehydrogenase (NAD+) activity"/>
    <property type="evidence" value="ECO:0000250"/>
    <property type="project" value="UniProtKB"/>
</dbReference>
<dbReference type="GO" id="GO:0047023">
    <property type="term" value="F:androsterone dehydrogenase [NAD(P)+] activity"/>
    <property type="evidence" value="ECO:0000250"/>
    <property type="project" value="UniProtKB"/>
</dbReference>
<dbReference type="GO" id="GO:0016491">
    <property type="term" value="F:oxidoreductase activity"/>
    <property type="evidence" value="ECO:0000318"/>
    <property type="project" value="GO_Central"/>
</dbReference>
<dbReference type="GO" id="GO:0047035">
    <property type="term" value="F:testosterone dehydrogenase (NAD+) activity"/>
    <property type="evidence" value="ECO:0000250"/>
    <property type="project" value="UniProtKB"/>
</dbReference>
<dbReference type="GO" id="GO:0042904">
    <property type="term" value="P:9-cis-retinoic acid biosynthetic process"/>
    <property type="evidence" value="ECO:0000250"/>
    <property type="project" value="UniProtKB"/>
</dbReference>
<dbReference type="GO" id="GO:0008209">
    <property type="term" value="P:androgen metabolic process"/>
    <property type="evidence" value="ECO:0000266"/>
    <property type="project" value="RGD"/>
</dbReference>
<dbReference type="GO" id="GO:0042448">
    <property type="term" value="P:progesterone metabolic process"/>
    <property type="evidence" value="ECO:0000266"/>
    <property type="project" value="RGD"/>
</dbReference>
<dbReference type="GO" id="GO:0002138">
    <property type="term" value="P:retinoic acid biosynthetic process"/>
    <property type="evidence" value="ECO:0000314"/>
    <property type="project" value="RGD"/>
</dbReference>
<dbReference type="GO" id="GO:0042573">
    <property type="term" value="P:retinoic acid metabolic process"/>
    <property type="evidence" value="ECO:0000303"/>
    <property type="project" value="RGD"/>
</dbReference>
<dbReference type="GO" id="GO:0008202">
    <property type="term" value="P:steroid metabolic process"/>
    <property type="evidence" value="ECO:0000318"/>
    <property type="project" value="GO_Central"/>
</dbReference>
<dbReference type="CDD" id="cd09805">
    <property type="entry name" value="type2_17beta_HSD-like_SDR_c"/>
    <property type="match status" value="1"/>
</dbReference>
<dbReference type="FunFam" id="3.40.50.720:FF:000074">
    <property type="entry name" value="Retinol dehydrogenase type 1"/>
    <property type="match status" value="1"/>
</dbReference>
<dbReference type="Gene3D" id="3.40.50.720">
    <property type="entry name" value="NAD(P)-binding Rossmann-like Domain"/>
    <property type="match status" value="1"/>
</dbReference>
<dbReference type="InterPro" id="IPR036291">
    <property type="entry name" value="NAD(P)-bd_dom_sf"/>
</dbReference>
<dbReference type="InterPro" id="IPR002347">
    <property type="entry name" value="SDR_fam"/>
</dbReference>
<dbReference type="PANTHER" id="PTHR43313:SF15">
    <property type="entry name" value="DEHYDROGENASE_REDUCTASE SDR FAMILY MEMBER 9"/>
    <property type="match status" value="1"/>
</dbReference>
<dbReference type="PANTHER" id="PTHR43313">
    <property type="entry name" value="SHORT-CHAIN DEHYDROGENASE/REDUCTASE FAMILY 9C"/>
    <property type="match status" value="1"/>
</dbReference>
<dbReference type="Pfam" id="PF00106">
    <property type="entry name" value="adh_short"/>
    <property type="match status" value="1"/>
</dbReference>
<dbReference type="PRINTS" id="PR00081">
    <property type="entry name" value="GDHRDH"/>
</dbReference>
<dbReference type="PRINTS" id="PR00080">
    <property type="entry name" value="SDRFAMILY"/>
</dbReference>
<dbReference type="SUPFAM" id="SSF51735">
    <property type="entry name" value="NAD(P)-binding Rossmann-fold domains"/>
    <property type="match status" value="1"/>
</dbReference>
<proteinExistence type="evidence at protein level"/>
<feature type="signal peptide" evidence="3">
    <location>
        <begin position="1"/>
        <end position="20"/>
    </location>
</feature>
<feature type="chain" id="PRO_0000042619" description="Dehydrogenase/reductase SDR family member 9">
    <location>
        <begin position="21"/>
        <end position="319"/>
    </location>
</feature>
<feature type="active site" description="Proton acceptor" evidence="2">
    <location>
        <position position="176"/>
    </location>
</feature>
<feature type="binding site" evidence="1">
    <location>
        <begin position="34"/>
        <end position="58"/>
    </location>
    <ligand>
        <name>NAD(+)</name>
        <dbReference type="ChEBI" id="CHEBI:57540"/>
    </ligand>
</feature>
<feature type="binding site" evidence="1">
    <location>
        <position position="83"/>
    </location>
    <ligand>
        <name>NAD(+)</name>
        <dbReference type="ChEBI" id="CHEBI:57540"/>
    </ligand>
</feature>
<feature type="binding site" evidence="1">
    <location>
        <position position="164"/>
    </location>
    <ligand>
        <name>substrate</name>
    </ligand>
</feature>
<feature type="binding site" evidence="1">
    <location>
        <position position="180"/>
    </location>
    <ligand>
        <name>NAD(+)</name>
        <dbReference type="ChEBI" id="CHEBI:57540"/>
    </ligand>
</feature>
<comment type="function">
    <text evidence="2 4">3-alpha-hydroxysteroid dehydrogenase that converts 3-alpha-tetrahydroprogesterone (allopregnanolone) to dihydroxyprogesterone and 3-alpha-androstanediol to dihydroxyprogesterone (By similarity). Plays also role in the biosynthesis of retinoic acid from retinaldehyde (PubMed:12390888). Can utilize both NADH and NADPH (By similarity).</text>
</comment>
<comment type="catalytic activity">
    <reaction evidence="2">
        <text>3beta-hydroxy-5alpha-pregnane-20-one + NAD(+) = 5alpha-pregnane-3,20-dione + NADH + H(+)</text>
        <dbReference type="Rhea" id="RHEA:41988"/>
        <dbReference type="ChEBI" id="CHEBI:11909"/>
        <dbReference type="ChEBI" id="CHEBI:15378"/>
        <dbReference type="ChEBI" id="CHEBI:28952"/>
        <dbReference type="ChEBI" id="CHEBI:57540"/>
        <dbReference type="ChEBI" id="CHEBI:57945"/>
    </reaction>
</comment>
<comment type="catalytic activity">
    <reaction evidence="2">
        <text>17beta-hydroxy-5alpha-androstan-3-one + NAD(+) = 5alpha-androstan-3,17-dione + NADH + H(+)</text>
        <dbReference type="Rhea" id="RHEA:41992"/>
        <dbReference type="ChEBI" id="CHEBI:15378"/>
        <dbReference type="ChEBI" id="CHEBI:15994"/>
        <dbReference type="ChEBI" id="CHEBI:16330"/>
        <dbReference type="ChEBI" id="CHEBI:57540"/>
        <dbReference type="ChEBI" id="CHEBI:57945"/>
    </reaction>
</comment>
<comment type="catalytic activity">
    <reaction evidence="2">
        <text>androsterone + NAD(+) = 5alpha-androstan-3,17-dione + NADH + H(+)</text>
        <dbReference type="Rhea" id="RHEA:20381"/>
        <dbReference type="ChEBI" id="CHEBI:15378"/>
        <dbReference type="ChEBI" id="CHEBI:15994"/>
        <dbReference type="ChEBI" id="CHEBI:16032"/>
        <dbReference type="ChEBI" id="CHEBI:57540"/>
        <dbReference type="ChEBI" id="CHEBI:57945"/>
        <dbReference type="EC" id="1.1.1.209"/>
    </reaction>
</comment>
<comment type="catalytic activity">
    <reaction evidence="2">
        <text>5alpha-androstane-3alpha,17beta-diol + NAD(+) = 17beta-hydroxy-5alpha-androstan-3-one + NADH + H(+)</text>
        <dbReference type="Rhea" id="RHEA:42004"/>
        <dbReference type="ChEBI" id="CHEBI:15378"/>
        <dbReference type="ChEBI" id="CHEBI:16330"/>
        <dbReference type="ChEBI" id="CHEBI:36713"/>
        <dbReference type="ChEBI" id="CHEBI:57540"/>
        <dbReference type="ChEBI" id="CHEBI:57945"/>
        <dbReference type="EC" id="1.1.1.53"/>
    </reaction>
</comment>
<comment type="catalytic activity">
    <reaction evidence="4">
        <text>all-trans-retinol + NAD(+) = all-trans-retinal + NADH + H(+)</text>
        <dbReference type="Rhea" id="RHEA:21284"/>
        <dbReference type="ChEBI" id="CHEBI:15378"/>
        <dbReference type="ChEBI" id="CHEBI:17336"/>
        <dbReference type="ChEBI" id="CHEBI:17898"/>
        <dbReference type="ChEBI" id="CHEBI:57540"/>
        <dbReference type="ChEBI" id="CHEBI:57945"/>
        <dbReference type="EC" id="1.1.1.105"/>
    </reaction>
</comment>
<comment type="catalytic activity">
    <reaction evidence="2">
        <text>3alpha-hydroxy-5alpha-pregnan-20-one + NAD(+) = 5alpha-pregnane-3,20-dione + NADH + H(+)</text>
        <dbReference type="Rhea" id="RHEA:41980"/>
        <dbReference type="ChEBI" id="CHEBI:15378"/>
        <dbReference type="ChEBI" id="CHEBI:28952"/>
        <dbReference type="ChEBI" id="CHEBI:50169"/>
        <dbReference type="ChEBI" id="CHEBI:57540"/>
        <dbReference type="ChEBI" id="CHEBI:57945"/>
    </reaction>
</comment>
<comment type="subunit">
    <text evidence="1">Homotetramer.</text>
</comment>
<comment type="subcellular location">
    <subcellularLocation>
        <location evidence="2">Microsome membrane</location>
    </subcellularLocation>
    <subcellularLocation>
        <location evidence="2">Endoplasmic reticulum membrane</location>
    </subcellularLocation>
</comment>
<comment type="tissue specificity">
    <text evidence="4">Highly expressed in epithelium of estrus uterus.</text>
</comment>
<comment type="similarity">
    <text evidence="6">Belongs to the short-chain dehydrogenases/reductases (SDR) family.</text>
</comment>
<keyword id="KW-0256">Endoplasmic reticulum</keyword>
<keyword id="KW-0443">Lipid metabolism</keyword>
<keyword id="KW-0472">Membrane</keyword>
<keyword id="KW-0492">Microsome</keyword>
<keyword id="KW-0520">NAD</keyword>
<keyword id="KW-0521">NADP</keyword>
<keyword id="KW-0560">Oxidoreductase</keyword>
<keyword id="KW-1185">Reference proteome</keyword>
<keyword id="KW-0732">Signal</keyword>
<keyword id="KW-0753">Steroid metabolism</keyword>